<gene>
    <name evidence="1" type="primary">hisH</name>
    <name type="ordered locus">Atu0041</name>
    <name type="ORF">AGR_C_64</name>
</gene>
<comment type="function">
    <text evidence="1">IGPS catalyzes the conversion of PRFAR and glutamine to IGP, AICAR and glutamate. The HisH subunit catalyzes the hydrolysis of glutamine to glutamate and ammonia as part of the synthesis of IGP and AICAR. The resulting ammonia molecule is channeled to the active site of HisF.</text>
</comment>
<comment type="catalytic activity">
    <reaction evidence="1">
        <text>5-[(5-phospho-1-deoxy-D-ribulos-1-ylimino)methylamino]-1-(5-phospho-beta-D-ribosyl)imidazole-4-carboxamide + L-glutamine = D-erythro-1-(imidazol-4-yl)glycerol 3-phosphate + 5-amino-1-(5-phospho-beta-D-ribosyl)imidazole-4-carboxamide + L-glutamate + H(+)</text>
        <dbReference type="Rhea" id="RHEA:24793"/>
        <dbReference type="ChEBI" id="CHEBI:15378"/>
        <dbReference type="ChEBI" id="CHEBI:29985"/>
        <dbReference type="ChEBI" id="CHEBI:58278"/>
        <dbReference type="ChEBI" id="CHEBI:58359"/>
        <dbReference type="ChEBI" id="CHEBI:58475"/>
        <dbReference type="ChEBI" id="CHEBI:58525"/>
        <dbReference type="EC" id="4.3.2.10"/>
    </reaction>
</comment>
<comment type="catalytic activity">
    <reaction evidence="1">
        <text>L-glutamine + H2O = L-glutamate + NH4(+)</text>
        <dbReference type="Rhea" id="RHEA:15889"/>
        <dbReference type="ChEBI" id="CHEBI:15377"/>
        <dbReference type="ChEBI" id="CHEBI:28938"/>
        <dbReference type="ChEBI" id="CHEBI:29985"/>
        <dbReference type="ChEBI" id="CHEBI:58359"/>
        <dbReference type="EC" id="3.5.1.2"/>
    </reaction>
</comment>
<comment type="pathway">
    <text evidence="1">Amino-acid biosynthesis; L-histidine biosynthesis; L-histidine from 5-phospho-alpha-D-ribose 1-diphosphate: step 5/9.</text>
</comment>
<comment type="subunit">
    <text evidence="1">Heterodimer of HisH and HisF.</text>
</comment>
<comment type="subcellular location">
    <subcellularLocation>
        <location evidence="1">Cytoplasm</location>
    </subcellularLocation>
</comment>
<sequence>MRVAIIDYGSGNLRSATKAFERAAREAGIDATIDLTDKPDHVASADRIVLPGVGAYADCSAGLNAMPGMHEALIEAVEKKAHPFLGICVGMQLMSSRGLEKTVSTGLGWIEGDVVEMTPSDPTLKIPQIGWNTLEIRHAHPLFDGIKTGADGLHAYFVHSYHLAAKHSTDVIATTNYGGAMTAFVGRDNMAGAQFHPEKSQTLGLALISNFLRWKP</sequence>
<evidence type="ECO:0000255" key="1">
    <source>
        <dbReference type="HAMAP-Rule" id="MF_00278"/>
    </source>
</evidence>
<reference key="1">
    <citation type="journal article" date="2001" name="Science">
        <title>The genome of the natural genetic engineer Agrobacterium tumefaciens C58.</title>
        <authorList>
            <person name="Wood D.W."/>
            <person name="Setubal J.C."/>
            <person name="Kaul R."/>
            <person name="Monks D.E."/>
            <person name="Kitajima J.P."/>
            <person name="Okura V.K."/>
            <person name="Zhou Y."/>
            <person name="Chen L."/>
            <person name="Wood G.E."/>
            <person name="Almeida N.F. Jr."/>
            <person name="Woo L."/>
            <person name="Chen Y."/>
            <person name="Paulsen I.T."/>
            <person name="Eisen J.A."/>
            <person name="Karp P.D."/>
            <person name="Bovee D. Sr."/>
            <person name="Chapman P."/>
            <person name="Clendenning J."/>
            <person name="Deatherage G."/>
            <person name="Gillet W."/>
            <person name="Grant C."/>
            <person name="Kutyavin T."/>
            <person name="Levy R."/>
            <person name="Li M.-J."/>
            <person name="McClelland E."/>
            <person name="Palmieri A."/>
            <person name="Raymond C."/>
            <person name="Rouse G."/>
            <person name="Saenphimmachak C."/>
            <person name="Wu Z."/>
            <person name="Romero P."/>
            <person name="Gordon D."/>
            <person name="Zhang S."/>
            <person name="Yoo H."/>
            <person name="Tao Y."/>
            <person name="Biddle P."/>
            <person name="Jung M."/>
            <person name="Krespan W."/>
            <person name="Perry M."/>
            <person name="Gordon-Kamm B."/>
            <person name="Liao L."/>
            <person name="Kim S."/>
            <person name="Hendrick C."/>
            <person name="Zhao Z.-Y."/>
            <person name="Dolan M."/>
            <person name="Chumley F."/>
            <person name="Tingey S.V."/>
            <person name="Tomb J.-F."/>
            <person name="Gordon M.P."/>
            <person name="Olson M.V."/>
            <person name="Nester E.W."/>
        </authorList>
    </citation>
    <scope>NUCLEOTIDE SEQUENCE [LARGE SCALE GENOMIC DNA]</scope>
    <source>
        <strain>C58 / ATCC 33970</strain>
    </source>
</reference>
<reference key="2">
    <citation type="journal article" date="2001" name="Science">
        <title>Genome sequence of the plant pathogen and biotechnology agent Agrobacterium tumefaciens C58.</title>
        <authorList>
            <person name="Goodner B."/>
            <person name="Hinkle G."/>
            <person name="Gattung S."/>
            <person name="Miller N."/>
            <person name="Blanchard M."/>
            <person name="Qurollo B."/>
            <person name="Goldman B.S."/>
            <person name="Cao Y."/>
            <person name="Askenazi M."/>
            <person name="Halling C."/>
            <person name="Mullin L."/>
            <person name="Houmiel K."/>
            <person name="Gordon J."/>
            <person name="Vaudin M."/>
            <person name="Iartchouk O."/>
            <person name="Epp A."/>
            <person name="Liu F."/>
            <person name="Wollam C."/>
            <person name="Allinger M."/>
            <person name="Doughty D."/>
            <person name="Scott C."/>
            <person name="Lappas C."/>
            <person name="Markelz B."/>
            <person name="Flanagan C."/>
            <person name="Crowell C."/>
            <person name="Gurson J."/>
            <person name="Lomo C."/>
            <person name="Sear C."/>
            <person name="Strub G."/>
            <person name="Cielo C."/>
            <person name="Slater S."/>
        </authorList>
    </citation>
    <scope>NUCLEOTIDE SEQUENCE [LARGE SCALE GENOMIC DNA]</scope>
    <source>
        <strain>C58 / ATCC 33970</strain>
    </source>
</reference>
<dbReference type="EC" id="4.3.2.10" evidence="1"/>
<dbReference type="EC" id="3.5.1.2" evidence="1"/>
<dbReference type="EMBL" id="AE007869">
    <property type="protein sequence ID" value="AAK85865.2"/>
    <property type="molecule type" value="Genomic_DNA"/>
</dbReference>
<dbReference type="PIR" id="AB2582">
    <property type="entry name" value="AB2582"/>
</dbReference>
<dbReference type="PIR" id="H97363">
    <property type="entry name" value="H97363"/>
</dbReference>
<dbReference type="RefSeq" id="NP_353080.2">
    <property type="nucleotide sequence ID" value="NC_003062.2"/>
</dbReference>
<dbReference type="RefSeq" id="WP_010970621.1">
    <property type="nucleotide sequence ID" value="NC_003062.2"/>
</dbReference>
<dbReference type="SMR" id="P58788"/>
<dbReference type="STRING" id="176299.Atu0041"/>
<dbReference type="EnsemblBacteria" id="AAK85865">
    <property type="protein sequence ID" value="AAK85865"/>
    <property type="gene ID" value="Atu0041"/>
</dbReference>
<dbReference type="GeneID" id="1132079"/>
<dbReference type="KEGG" id="atu:Atu0041"/>
<dbReference type="PATRIC" id="fig|176299.10.peg.41"/>
<dbReference type="eggNOG" id="COG0118">
    <property type="taxonomic scope" value="Bacteria"/>
</dbReference>
<dbReference type="HOGENOM" id="CLU_071837_2_0_5"/>
<dbReference type="OrthoDB" id="9807137at2"/>
<dbReference type="PhylomeDB" id="P58788"/>
<dbReference type="BioCyc" id="AGRO:ATU0041-MONOMER"/>
<dbReference type="UniPathway" id="UPA00031">
    <property type="reaction ID" value="UER00010"/>
</dbReference>
<dbReference type="Proteomes" id="UP000000813">
    <property type="component" value="Chromosome circular"/>
</dbReference>
<dbReference type="GO" id="GO:0005737">
    <property type="term" value="C:cytoplasm"/>
    <property type="evidence" value="ECO:0007669"/>
    <property type="project" value="UniProtKB-SubCell"/>
</dbReference>
<dbReference type="GO" id="GO:0004359">
    <property type="term" value="F:glutaminase activity"/>
    <property type="evidence" value="ECO:0007669"/>
    <property type="project" value="UniProtKB-EC"/>
</dbReference>
<dbReference type="GO" id="GO:0000107">
    <property type="term" value="F:imidazoleglycerol-phosphate synthase activity"/>
    <property type="evidence" value="ECO:0007669"/>
    <property type="project" value="UniProtKB-UniRule"/>
</dbReference>
<dbReference type="GO" id="GO:0016829">
    <property type="term" value="F:lyase activity"/>
    <property type="evidence" value="ECO:0007669"/>
    <property type="project" value="UniProtKB-KW"/>
</dbReference>
<dbReference type="GO" id="GO:0000105">
    <property type="term" value="P:L-histidine biosynthetic process"/>
    <property type="evidence" value="ECO:0007669"/>
    <property type="project" value="UniProtKB-UniRule"/>
</dbReference>
<dbReference type="CDD" id="cd01748">
    <property type="entry name" value="GATase1_IGP_Synthase"/>
    <property type="match status" value="1"/>
</dbReference>
<dbReference type="Gene3D" id="3.40.50.880">
    <property type="match status" value="1"/>
</dbReference>
<dbReference type="HAMAP" id="MF_00278">
    <property type="entry name" value="HisH"/>
    <property type="match status" value="1"/>
</dbReference>
<dbReference type="InterPro" id="IPR029062">
    <property type="entry name" value="Class_I_gatase-like"/>
</dbReference>
<dbReference type="InterPro" id="IPR017926">
    <property type="entry name" value="GATASE"/>
</dbReference>
<dbReference type="InterPro" id="IPR010139">
    <property type="entry name" value="Imidazole-glycPsynth_HisH"/>
</dbReference>
<dbReference type="NCBIfam" id="TIGR01855">
    <property type="entry name" value="IMP_synth_hisH"/>
    <property type="match status" value="1"/>
</dbReference>
<dbReference type="PANTHER" id="PTHR42701">
    <property type="entry name" value="IMIDAZOLE GLYCEROL PHOSPHATE SYNTHASE SUBUNIT HISH"/>
    <property type="match status" value="1"/>
</dbReference>
<dbReference type="PANTHER" id="PTHR42701:SF1">
    <property type="entry name" value="IMIDAZOLE GLYCEROL PHOSPHATE SYNTHASE SUBUNIT HISH"/>
    <property type="match status" value="1"/>
</dbReference>
<dbReference type="Pfam" id="PF00117">
    <property type="entry name" value="GATase"/>
    <property type="match status" value="1"/>
</dbReference>
<dbReference type="PIRSF" id="PIRSF000495">
    <property type="entry name" value="Amidotransf_hisH"/>
    <property type="match status" value="1"/>
</dbReference>
<dbReference type="SUPFAM" id="SSF52317">
    <property type="entry name" value="Class I glutamine amidotransferase-like"/>
    <property type="match status" value="1"/>
</dbReference>
<dbReference type="PROSITE" id="PS51273">
    <property type="entry name" value="GATASE_TYPE_1"/>
    <property type="match status" value="1"/>
</dbReference>
<proteinExistence type="inferred from homology"/>
<keyword id="KW-0028">Amino-acid biosynthesis</keyword>
<keyword id="KW-0963">Cytoplasm</keyword>
<keyword id="KW-0315">Glutamine amidotransferase</keyword>
<keyword id="KW-0368">Histidine biosynthesis</keyword>
<keyword id="KW-0378">Hydrolase</keyword>
<keyword id="KW-0456">Lyase</keyword>
<keyword id="KW-1185">Reference proteome</keyword>
<feature type="chain" id="PRO_0000152333" description="Imidazole glycerol phosphate synthase subunit HisH">
    <location>
        <begin position="1"/>
        <end position="216"/>
    </location>
</feature>
<feature type="domain" description="Glutamine amidotransferase type-1" evidence="1">
    <location>
        <begin position="2"/>
        <end position="216"/>
    </location>
</feature>
<feature type="active site" description="Nucleophile" evidence="1">
    <location>
        <position position="88"/>
    </location>
</feature>
<feature type="active site" evidence="1">
    <location>
        <position position="196"/>
    </location>
</feature>
<feature type="active site" evidence="1">
    <location>
        <position position="198"/>
    </location>
</feature>
<protein>
    <recommendedName>
        <fullName evidence="1">Imidazole glycerol phosphate synthase subunit HisH</fullName>
        <ecNumber evidence="1">4.3.2.10</ecNumber>
    </recommendedName>
    <alternativeName>
        <fullName evidence="1">IGP synthase glutaminase subunit</fullName>
        <ecNumber evidence="1">3.5.1.2</ecNumber>
    </alternativeName>
    <alternativeName>
        <fullName evidence="1">IGP synthase subunit HisH</fullName>
    </alternativeName>
    <alternativeName>
        <fullName evidence="1">ImGP synthase subunit HisH</fullName>
        <shortName evidence="1">IGPS subunit HisH</shortName>
    </alternativeName>
</protein>
<organism>
    <name type="scientific">Agrobacterium fabrum (strain C58 / ATCC 33970)</name>
    <name type="common">Agrobacterium tumefaciens (strain C58)</name>
    <dbReference type="NCBI Taxonomy" id="176299"/>
    <lineage>
        <taxon>Bacteria</taxon>
        <taxon>Pseudomonadati</taxon>
        <taxon>Pseudomonadota</taxon>
        <taxon>Alphaproteobacteria</taxon>
        <taxon>Hyphomicrobiales</taxon>
        <taxon>Rhizobiaceae</taxon>
        <taxon>Rhizobium/Agrobacterium group</taxon>
        <taxon>Agrobacterium</taxon>
        <taxon>Agrobacterium tumefaciens complex</taxon>
    </lineage>
</organism>
<accession>P58788</accession>
<name>HIS5_AGRFC</name>